<accession>O31576</accession>
<accession>Q79EV9</accession>
<comment type="subunit">
    <text evidence="1">Homodimer.</text>
</comment>
<proteinExistence type="evidence at protein level"/>
<keyword id="KW-0002">3D-structure</keyword>
<keyword id="KW-1185">Reference proteome</keyword>
<gene>
    <name type="primary">yfhH</name>
    <name type="ordered locus">BSU08530</name>
</gene>
<reference key="1">
    <citation type="journal article" date="1996" name="DNA Res.">
        <title>Cloning and sequencing of a 27.8-kb nucleotide sequence of the 79 degrees-81 degrees region of the Bacillus subtilis genome containing the sspE locus.</title>
        <authorList>
            <person name="Yamamoto H."/>
            <person name="Uchiyama S."/>
            <person name="Sekiguchi J."/>
        </authorList>
    </citation>
    <scope>NUCLEOTIDE SEQUENCE [GENOMIC DNA]</scope>
</reference>
<reference key="2">
    <citation type="journal article" date="1997" name="Nature">
        <title>The complete genome sequence of the Gram-positive bacterium Bacillus subtilis.</title>
        <authorList>
            <person name="Kunst F."/>
            <person name="Ogasawara N."/>
            <person name="Moszer I."/>
            <person name="Albertini A.M."/>
            <person name="Alloni G."/>
            <person name="Azevedo V."/>
            <person name="Bertero M.G."/>
            <person name="Bessieres P."/>
            <person name="Bolotin A."/>
            <person name="Borchert S."/>
            <person name="Borriss R."/>
            <person name="Boursier L."/>
            <person name="Brans A."/>
            <person name="Braun M."/>
            <person name="Brignell S.C."/>
            <person name="Bron S."/>
            <person name="Brouillet S."/>
            <person name="Bruschi C.V."/>
            <person name="Caldwell B."/>
            <person name="Capuano V."/>
            <person name="Carter N.M."/>
            <person name="Choi S.-K."/>
            <person name="Codani J.-J."/>
            <person name="Connerton I.F."/>
            <person name="Cummings N.J."/>
            <person name="Daniel R.A."/>
            <person name="Denizot F."/>
            <person name="Devine K.M."/>
            <person name="Duesterhoeft A."/>
            <person name="Ehrlich S.D."/>
            <person name="Emmerson P.T."/>
            <person name="Entian K.-D."/>
            <person name="Errington J."/>
            <person name="Fabret C."/>
            <person name="Ferrari E."/>
            <person name="Foulger D."/>
            <person name="Fritz C."/>
            <person name="Fujita M."/>
            <person name="Fujita Y."/>
            <person name="Fuma S."/>
            <person name="Galizzi A."/>
            <person name="Galleron N."/>
            <person name="Ghim S.-Y."/>
            <person name="Glaser P."/>
            <person name="Goffeau A."/>
            <person name="Golightly E.J."/>
            <person name="Grandi G."/>
            <person name="Guiseppi G."/>
            <person name="Guy B.J."/>
            <person name="Haga K."/>
            <person name="Haiech J."/>
            <person name="Harwood C.R."/>
            <person name="Henaut A."/>
            <person name="Hilbert H."/>
            <person name="Holsappel S."/>
            <person name="Hosono S."/>
            <person name="Hullo M.-F."/>
            <person name="Itaya M."/>
            <person name="Jones L.-M."/>
            <person name="Joris B."/>
            <person name="Karamata D."/>
            <person name="Kasahara Y."/>
            <person name="Klaerr-Blanchard M."/>
            <person name="Klein C."/>
            <person name="Kobayashi Y."/>
            <person name="Koetter P."/>
            <person name="Koningstein G."/>
            <person name="Krogh S."/>
            <person name="Kumano M."/>
            <person name="Kurita K."/>
            <person name="Lapidus A."/>
            <person name="Lardinois S."/>
            <person name="Lauber J."/>
            <person name="Lazarevic V."/>
            <person name="Lee S.-M."/>
            <person name="Levine A."/>
            <person name="Liu H."/>
            <person name="Masuda S."/>
            <person name="Mauel C."/>
            <person name="Medigue C."/>
            <person name="Medina N."/>
            <person name="Mellado R.P."/>
            <person name="Mizuno M."/>
            <person name="Moestl D."/>
            <person name="Nakai S."/>
            <person name="Noback M."/>
            <person name="Noone D."/>
            <person name="O'Reilly M."/>
            <person name="Ogawa K."/>
            <person name="Ogiwara A."/>
            <person name="Oudega B."/>
            <person name="Park S.-H."/>
            <person name="Parro V."/>
            <person name="Pohl T.M."/>
            <person name="Portetelle D."/>
            <person name="Porwollik S."/>
            <person name="Prescott A.M."/>
            <person name="Presecan E."/>
            <person name="Pujic P."/>
            <person name="Purnelle B."/>
            <person name="Rapoport G."/>
            <person name="Rey M."/>
            <person name="Reynolds S."/>
            <person name="Rieger M."/>
            <person name="Rivolta C."/>
            <person name="Rocha E."/>
            <person name="Roche B."/>
            <person name="Rose M."/>
            <person name="Sadaie Y."/>
            <person name="Sato T."/>
            <person name="Scanlan E."/>
            <person name="Schleich S."/>
            <person name="Schroeter R."/>
            <person name="Scoffone F."/>
            <person name="Sekiguchi J."/>
            <person name="Sekowska A."/>
            <person name="Seror S.J."/>
            <person name="Serror P."/>
            <person name="Shin B.-S."/>
            <person name="Soldo B."/>
            <person name="Sorokin A."/>
            <person name="Tacconi E."/>
            <person name="Takagi T."/>
            <person name="Takahashi H."/>
            <person name="Takemaru K."/>
            <person name="Takeuchi M."/>
            <person name="Tamakoshi A."/>
            <person name="Tanaka T."/>
            <person name="Terpstra P."/>
            <person name="Tognoni A."/>
            <person name="Tosato V."/>
            <person name="Uchiyama S."/>
            <person name="Vandenbol M."/>
            <person name="Vannier F."/>
            <person name="Vassarotti A."/>
            <person name="Viari A."/>
            <person name="Wambutt R."/>
            <person name="Wedler E."/>
            <person name="Wedler H."/>
            <person name="Weitzenegger T."/>
            <person name="Winters P."/>
            <person name="Wipat A."/>
            <person name="Yamamoto H."/>
            <person name="Yamane K."/>
            <person name="Yasumoto K."/>
            <person name="Yata K."/>
            <person name="Yoshida K."/>
            <person name="Yoshikawa H.-F."/>
            <person name="Zumstein E."/>
            <person name="Yoshikawa H."/>
            <person name="Danchin A."/>
        </authorList>
    </citation>
    <scope>NUCLEOTIDE SEQUENCE [LARGE SCALE GENOMIC DNA]</scope>
    <source>
        <strain>168</strain>
    </source>
</reference>
<reference key="3">
    <citation type="submission" date="2009-02" db="PDB data bank">
        <title>Crystal structure of Bacillus subtilis yfhH hypothetical protein.</title>
        <authorList>
            <consortium name="Midwest center for structural genomics (MCSG)"/>
        </authorList>
    </citation>
    <scope>X-RAY CRYSTALLOGRAPHY (1.71 ANGSTROMS)</scope>
    <scope>SUBUNIT</scope>
</reference>
<feature type="chain" id="PRO_0000382893" description="Uncharacterized protein YfhH">
    <location>
        <begin position="1"/>
        <end position="104"/>
    </location>
</feature>
<feature type="helix" evidence="2">
    <location>
        <begin position="1"/>
        <end position="6"/>
    </location>
</feature>
<feature type="helix" evidence="2">
    <location>
        <begin position="10"/>
        <end position="29"/>
    </location>
</feature>
<feature type="helix" evidence="2">
    <location>
        <begin position="33"/>
        <end position="50"/>
    </location>
</feature>
<feature type="helix" evidence="2">
    <location>
        <begin position="53"/>
        <end position="55"/>
    </location>
</feature>
<feature type="strand" evidence="2">
    <location>
        <begin position="61"/>
        <end position="64"/>
    </location>
</feature>
<feature type="strand" evidence="2">
    <location>
        <begin position="70"/>
        <end position="77"/>
    </location>
</feature>
<feature type="strand" evidence="2">
    <location>
        <begin position="80"/>
        <end position="85"/>
    </location>
</feature>
<feature type="strand" evidence="2">
    <location>
        <begin position="88"/>
        <end position="96"/>
    </location>
</feature>
<feature type="helix" evidence="2">
    <location>
        <begin position="97"/>
        <end position="99"/>
    </location>
</feature>
<feature type="strand" evidence="2">
    <location>
        <begin position="100"/>
        <end position="102"/>
    </location>
</feature>
<organism>
    <name type="scientific">Bacillus subtilis (strain 168)</name>
    <dbReference type="NCBI Taxonomy" id="224308"/>
    <lineage>
        <taxon>Bacteria</taxon>
        <taxon>Bacillati</taxon>
        <taxon>Bacillota</taxon>
        <taxon>Bacilli</taxon>
        <taxon>Bacillales</taxon>
        <taxon>Bacillaceae</taxon>
        <taxon>Bacillus</taxon>
    </lineage>
</organism>
<sequence>MEKRYSQMTPHELNTEIALLSEKARKAEQHGIINELAVLERKITMAKAYLLNPEDYSPGETYRVENTEDEFTISYLNGVFAWGYRTSSPQQEEALPISVLQEKE</sequence>
<name>YFHH_BACSU</name>
<evidence type="ECO:0000269" key="1">
    <source ref="3"/>
</evidence>
<evidence type="ECO:0007829" key="2">
    <source>
        <dbReference type="PDB" id="1SF9"/>
    </source>
</evidence>
<protein>
    <recommendedName>
        <fullName>Uncharacterized protein YfhH</fullName>
    </recommendedName>
</protein>
<dbReference type="EMBL" id="D85082">
    <property type="protein sequence ID" value="BAA24474.1"/>
    <property type="molecule type" value="Genomic_DNA"/>
</dbReference>
<dbReference type="EMBL" id="AL009126">
    <property type="protein sequence ID" value="CAB12682.1"/>
    <property type="molecule type" value="Genomic_DNA"/>
</dbReference>
<dbReference type="PIR" id="A69801">
    <property type="entry name" value="A69801"/>
</dbReference>
<dbReference type="RefSeq" id="NP_388734.1">
    <property type="nucleotide sequence ID" value="NC_000964.3"/>
</dbReference>
<dbReference type="RefSeq" id="WP_003244592.1">
    <property type="nucleotide sequence ID" value="NZ_OZ025638.1"/>
</dbReference>
<dbReference type="PDB" id="1SF9">
    <property type="method" value="X-ray"/>
    <property type="resolution" value="1.71 A"/>
    <property type="chains" value="A=1-104"/>
</dbReference>
<dbReference type="PDBsum" id="1SF9"/>
<dbReference type="SMR" id="O31576"/>
<dbReference type="FunCoup" id="O31576">
    <property type="interactions" value="16"/>
</dbReference>
<dbReference type="STRING" id="224308.BSU08530"/>
<dbReference type="jPOST" id="O31576"/>
<dbReference type="PaxDb" id="224308-BSU08530"/>
<dbReference type="EnsemblBacteria" id="CAB12682">
    <property type="protein sequence ID" value="CAB12682"/>
    <property type="gene ID" value="BSU_08530"/>
</dbReference>
<dbReference type="GeneID" id="936189"/>
<dbReference type="KEGG" id="bsu:BSU08530"/>
<dbReference type="PATRIC" id="fig|224308.179.peg.920"/>
<dbReference type="eggNOG" id="ENOG5032PGC">
    <property type="taxonomic scope" value="Bacteria"/>
</dbReference>
<dbReference type="InParanoid" id="O31576"/>
<dbReference type="OrthoDB" id="2353288at2"/>
<dbReference type="PhylomeDB" id="O31576"/>
<dbReference type="BioCyc" id="BSUB:BSU08530-MONOMER"/>
<dbReference type="EvolutionaryTrace" id="O31576"/>
<dbReference type="Proteomes" id="UP000001570">
    <property type="component" value="Chromosome"/>
</dbReference>
<dbReference type="Gene3D" id="1.10.287.880">
    <property type="entry name" value="Hypothetical protein YfhH domain"/>
    <property type="match status" value="1"/>
</dbReference>
<dbReference type="Gene3D" id="2.30.30.340">
    <property type="entry name" value="Hypothetical protein YfhH like domains"/>
    <property type="match status" value="1"/>
</dbReference>
<dbReference type="InterPro" id="IPR036289">
    <property type="entry name" value="YfhH"/>
</dbReference>
<dbReference type="InterPro" id="IPR014938">
    <property type="entry name" value="YfhH-like"/>
</dbReference>
<dbReference type="Pfam" id="PF08838">
    <property type="entry name" value="DUF1811"/>
    <property type="match status" value="1"/>
</dbReference>
<dbReference type="SUPFAM" id="SSF101697">
    <property type="entry name" value="Hypothetical protein YfhH"/>
    <property type="match status" value="1"/>
</dbReference>